<keyword id="KW-1185">Reference proteome</keyword>
<keyword id="KW-0687">Ribonucleoprotein</keyword>
<keyword id="KW-0689">Ribosomal protein</keyword>
<keyword id="KW-0694">RNA-binding</keyword>
<keyword id="KW-0699">rRNA-binding</keyword>
<sequence length="274" mass="30003">MAIKKFKPTSPGRRFVTVSDFEEITRTEPEKSLVEPLKKSGGRNAQGRITVRHRGGGHKRLYRIIDFKRDKDGIPAKVASIEYDPNRSARIALLHYADGEKRYIIAPAGLEVGQTVVSGPDADIKAGNCLPLKNIPVGTMIHNIELYPNGGGKLVRSAGASAQLMAKEGKYANIRMPSGEMRLLLQECRATIGQVGNVEHENITIGKAGRKRWLGIRPTVRGVVMNPVDHPHGGGEGRSPIGRNPVTPWGKPALGARTRKKKPGDRLIVKRRAR</sequence>
<gene>
    <name evidence="1" type="primary">rplB</name>
    <name type="ordered locus">PTH_0323</name>
</gene>
<name>RL2_PELTS</name>
<comment type="function">
    <text evidence="1">One of the primary rRNA binding proteins. Required for association of the 30S and 50S subunits to form the 70S ribosome, for tRNA binding and peptide bond formation. It has been suggested to have peptidyltransferase activity; this is somewhat controversial. Makes several contacts with the 16S rRNA in the 70S ribosome.</text>
</comment>
<comment type="subunit">
    <text evidence="1">Part of the 50S ribosomal subunit. Forms a bridge to the 30S subunit in the 70S ribosome.</text>
</comment>
<comment type="similarity">
    <text evidence="1">Belongs to the universal ribosomal protein uL2 family.</text>
</comment>
<reference key="1">
    <citation type="journal article" date="2008" name="Genome Res.">
        <title>The genome of Pelotomaculum thermopropionicum reveals niche-associated evolution in anaerobic microbiota.</title>
        <authorList>
            <person name="Kosaka T."/>
            <person name="Kato S."/>
            <person name="Shimoyama T."/>
            <person name="Ishii S."/>
            <person name="Abe T."/>
            <person name="Watanabe K."/>
        </authorList>
    </citation>
    <scope>NUCLEOTIDE SEQUENCE [LARGE SCALE GENOMIC DNA]</scope>
    <source>
        <strain>DSM 13744 / JCM 10971 / SI</strain>
    </source>
</reference>
<organism>
    <name type="scientific">Pelotomaculum thermopropionicum (strain DSM 13744 / JCM 10971 / SI)</name>
    <dbReference type="NCBI Taxonomy" id="370438"/>
    <lineage>
        <taxon>Bacteria</taxon>
        <taxon>Bacillati</taxon>
        <taxon>Bacillota</taxon>
        <taxon>Clostridia</taxon>
        <taxon>Eubacteriales</taxon>
        <taxon>Desulfotomaculaceae</taxon>
        <taxon>Pelotomaculum</taxon>
    </lineage>
</organism>
<evidence type="ECO:0000255" key="1">
    <source>
        <dbReference type="HAMAP-Rule" id="MF_01320"/>
    </source>
</evidence>
<evidence type="ECO:0000256" key="2">
    <source>
        <dbReference type="SAM" id="MobiDB-lite"/>
    </source>
</evidence>
<evidence type="ECO:0000305" key="3"/>
<proteinExistence type="inferred from homology"/>
<protein>
    <recommendedName>
        <fullName evidence="1">Large ribosomal subunit protein uL2</fullName>
    </recommendedName>
    <alternativeName>
        <fullName evidence="3">50S ribosomal protein L2</fullName>
    </alternativeName>
</protein>
<accession>A5D5J3</accession>
<dbReference type="EMBL" id="AP009389">
    <property type="protein sequence ID" value="BAF58504.1"/>
    <property type="molecule type" value="Genomic_DNA"/>
</dbReference>
<dbReference type="SMR" id="A5D5J3"/>
<dbReference type="STRING" id="370438.PTH_0323"/>
<dbReference type="KEGG" id="pth:PTH_0323"/>
<dbReference type="eggNOG" id="COG0090">
    <property type="taxonomic scope" value="Bacteria"/>
</dbReference>
<dbReference type="HOGENOM" id="CLU_036235_2_1_9"/>
<dbReference type="Proteomes" id="UP000006556">
    <property type="component" value="Chromosome"/>
</dbReference>
<dbReference type="GO" id="GO:0015934">
    <property type="term" value="C:large ribosomal subunit"/>
    <property type="evidence" value="ECO:0007669"/>
    <property type="project" value="InterPro"/>
</dbReference>
<dbReference type="GO" id="GO:0019843">
    <property type="term" value="F:rRNA binding"/>
    <property type="evidence" value="ECO:0007669"/>
    <property type="project" value="UniProtKB-UniRule"/>
</dbReference>
<dbReference type="GO" id="GO:0003735">
    <property type="term" value="F:structural constituent of ribosome"/>
    <property type="evidence" value="ECO:0007669"/>
    <property type="project" value="InterPro"/>
</dbReference>
<dbReference type="GO" id="GO:0016740">
    <property type="term" value="F:transferase activity"/>
    <property type="evidence" value="ECO:0007669"/>
    <property type="project" value="InterPro"/>
</dbReference>
<dbReference type="GO" id="GO:0002181">
    <property type="term" value="P:cytoplasmic translation"/>
    <property type="evidence" value="ECO:0007669"/>
    <property type="project" value="TreeGrafter"/>
</dbReference>
<dbReference type="FunFam" id="2.30.30.30:FF:000001">
    <property type="entry name" value="50S ribosomal protein L2"/>
    <property type="match status" value="1"/>
</dbReference>
<dbReference type="FunFam" id="2.40.50.140:FF:000003">
    <property type="entry name" value="50S ribosomal protein L2"/>
    <property type="match status" value="1"/>
</dbReference>
<dbReference type="FunFam" id="4.10.950.10:FF:000001">
    <property type="entry name" value="50S ribosomal protein L2"/>
    <property type="match status" value="1"/>
</dbReference>
<dbReference type="Gene3D" id="2.30.30.30">
    <property type="match status" value="1"/>
</dbReference>
<dbReference type="Gene3D" id="2.40.50.140">
    <property type="entry name" value="Nucleic acid-binding proteins"/>
    <property type="match status" value="1"/>
</dbReference>
<dbReference type="Gene3D" id="4.10.950.10">
    <property type="entry name" value="Ribosomal protein L2, domain 3"/>
    <property type="match status" value="1"/>
</dbReference>
<dbReference type="HAMAP" id="MF_01320_B">
    <property type="entry name" value="Ribosomal_uL2_B"/>
    <property type="match status" value="1"/>
</dbReference>
<dbReference type="InterPro" id="IPR012340">
    <property type="entry name" value="NA-bd_OB-fold"/>
</dbReference>
<dbReference type="InterPro" id="IPR014722">
    <property type="entry name" value="Rib_uL2_dom2"/>
</dbReference>
<dbReference type="InterPro" id="IPR002171">
    <property type="entry name" value="Ribosomal_uL2"/>
</dbReference>
<dbReference type="InterPro" id="IPR005880">
    <property type="entry name" value="Ribosomal_uL2_bac/org-type"/>
</dbReference>
<dbReference type="InterPro" id="IPR022669">
    <property type="entry name" value="Ribosomal_uL2_C"/>
</dbReference>
<dbReference type="InterPro" id="IPR022671">
    <property type="entry name" value="Ribosomal_uL2_CS"/>
</dbReference>
<dbReference type="InterPro" id="IPR014726">
    <property type="entry name" value="Ribosomal_uL2_dom3"/>
</dbReference>
<dbReference type="InterPro" id="IPR022666">
    <property type="entry name" value="Ribosomal_uL2_RNA-bd_dom"/>
</dbReference>
<dbReference type="InterPro" id="IPR008991">
    <property type="entry name" value="Translation_prot_SH3-like_sf"/>
</dbReference>
<dbReference type="NCBIfam" id="TIGR01171">
    <property type="entry name" value="rplB_bact"/>
    <property type="match status" value="1"/>
</dbReference>
<dbReference type="PANTHER" id="PTHR13691:SF5">
    <property type="entry name" value="LARGE RIBOSOMAL SUBUNIT PROTEIN UL2M"/>
    <property type="match status" value="1"/>
</dbReference>
<dbReference type="PANTHER" id="PTHR13691">
    <property type="entry name" value="RIBOSOMAL PROTEIN L2"/>
    <property type="match status" value="1"/>
</dbReference>
<dbReference type="Pfam" id="PF00181">
    <property type="entry name" value="Ribosomal_L2"/>
    <property type="match status" value="1"/>
</dbReference>
<dbReference type="Pfam" id="PF03947">
    <property type="entry name" value="Ribosomal_L2_C"/>
    <property type="match status" value="1"/>
</dbReference>
<dbReference type="PIRSF" id="PIRSF002158">
    <property type="entry name" value="Ribosomal_L2"/>
    <property type="match status" value="1"/>
</dbReference>
<dbReference type="SMART" id="SM01383">
    <property type="entry name" value="Ribosomal_L2"/>
    <property type="match status" value="1"/>
</dbReference>
<dbReference type="SMART" id="SM01382">
    <property type="entry name" value="Ribosomal_L2_C"/>
    <property type="match status" value="1"/>
</dbReference>
<dbReference type="SUPFAM" id="SSF50249">
    <property type="entry name" value="Nucleic acid-binding proteins"/>
    <property type="match status" value="1"/>
</dbReference>
<dbReference type="SUPFAM" id="SSF50104">
    <property type="entry name" value="Translation proteins SH3-like domain"/>
    <property type="match status" value="1"/>
</dbReference>
<dbReference type="PROSITE" id="PS00467">
    <property type="entry name" value="RIBOSOMAL_L2"/>
    <property type="match status" value="1"/>
</dbReference>
<feature type="chain" id="PRO_1000086340" description="Large ribosomal subunit protein uL2">
    <location>
        <begin position="1"/>
        <end position="274"/>
    </location>
</feature>
<feature type="region of interest" description="Disordered" evidence="2">
    <location>
        <begin position="224"/>
        <end position="274"/>
    </location>
</feature>
<feature type="compositionally biased region" description="Basic residues" evidence="2">
    <location>
        <begin position="257"/>
        <end position="274"/>
    </location>
</feature>